<gene>
    <name evidence="1" type="primary">rplK</name>
    <name type="ordered locus">NT01EI_0170</name>
</gene>
<name>RL11_EDWI9</name>
<comment type="function">
    <text evidence="1">Forms part of the ribosomal stalk which helps the ribosome interact with GTP-bound translation factors.</text>
</comment>
<comment type="subunit">
    <text evidence="1">Part of the ribosomal stalk of the 50S ribosomal subunit. Interacts with L10 and the large rRNA to form the base of the stalk. L10 forms an elongated spine to which L12 dimers bind in a sequential fashion forming a multimeric L10(L12)X complex.</text>
</comment>
<comment type="PTM">
    <text evidence="1">One or more lysine residues are methylated.</text>
</comment>
<comment type="similarity">
    <text evidence="1">Belongs to the universal ribosomal protein uL11 family.</text>
</comment>
<keyword id="KW-0488">Methylation</keyword>
<keyword id="KW-0687">Ribonucleoprotein</keyword>
<keyword id="KW-0689">Ribosomal protein</keyword>
<keyword id="KW-0694">RNA-binding</keyword>
<keyword id="KW-0699">rRNA-binding</keyword>
<protein>
    <recommendedName>
        <fullName evidence="1">Large ribosomal subunit protein uL11</fullName>
    </recommendedName>
    <alternativeName>
        <fullName evidence="2">50S ribosomal protein L11</fullName>
    </alternativeName>
</protein>
<sequence>MAKKVQAYVKLQVAAGMANPSPPVGPALGQQGVNIMEFCKAFNAKTDSIEKGLPIPVVITVYSDRSFTFVTKTPPAAVLLKKAAGVKSGSGKPNKDKVGKVTRAQVREIAETKAADMTGADVEAMARSIEGTARSMGLVVED</sequence>
<evidence type="ECO:0000255" key="1">
    <source>
        <dbReference type="HAMAP-Rule" id="MF_00736"/>
    </source>
</evidence>
<evidence type="ECO:0000305" key="2"/>
<proteinExistence type="inferred from homology"/>
<dbReference type="EMBL" id="CP001600">
    <property type="protein sequence ID" value="ACR67418.1"/>
    <property type="molecule type" value="Genomic_DNA"/>
</dbReference>
<dbReference type="RefSeq" id="WP_015869632.1">
    <property type="nucleotide sequence ID" value="NZ_CP169062.1"/>
</dbReference>
<dbReference type="SMR" id="C5BHE0"/>
<dbReference type="STRING" id="67780.B6E78_12010"/>
<dbReference type="GeneID" id="69537277"/>
<dbReference type="KEGG" id="eic:NT01EI_0170"/>
<dbReference type="PATRIC" id="fig|634503.3.peg.153"/>
<dbReference type="HOGENOM" id="CLU_074237_2_0_6"/>
<dbReference type="OrthoDB" id="9802408at2"/>
<dbReference type="Proteomes" id="UP000001485">
    <property type="component" value="Chromosome"/>
</dbReference>
<dbReference type="GO" id="GO:0022625">
    <property type="term" value="C:cytosolic large ribosomal subunit"/>
    <property type="evidence" value="ECO:0007669"/>
    <property type="project" value="TreeGrafter"/>
</dbReference>
<dbReference type="GO" id="GO:0070180">
    <property type="term" value="F:large ribosomal subunit rRNA binding"/>
    <property type="evidence" value="ECO:0007669"/>
    <property type="project" value="UniProtKB-UniRule"/>
</dbReference>
<dbReference type="GO" id="GO:0003735">
    <property type="term" value="F:structural constituent of ribosome"/>
    <property type="evidence" value="ECO:0007669"/>
    <property type="project" value="InterPro"/>
</dbReference>
<dbReference type="GO" id="GO:0006412">
    <property type="term" value="P:translation"/>
    <property type="evidence" value="ECO:0007669"/>
    <property type="project" value="UniProtKB-UniRule"/>
</dbReference>
<dbReference type="CDD" id="cd00349">
    <property type="entry name" value="Ribosomal_L11"/>
    <property type="match status" value="1"/>
</dbReference>
<dbReference type="FunFam" id="1.10.10.250:FF:000001">
    <property type="entry name" value="50S ribosomal protein L11"/>
    <property type="match status" value="1"/>
</dbReference>
<dbReference type="FunFam" id="3.30.1550.10:FF:000001">
    <property type="entry name" value="50S ribosomal protein L11"/>
    <property type="match status" value="1"/>
</dbReference>
<dbReference type="Gene3D" id="1.10.10.250">
    <property type="entry name" value="Ribosomal protein L11, C-terminal domain"/>
    <property type="match status" value="1"/>
</dbReference>
<dbReference type="Gene3D" id="3.30.1550.10">
    <property type="entry name" value="Ribosomal protein L11/L12, N-terminal domain"/>
    <property type="match status" value="1"/>
</dbReference>
<dbReference type="HAMAP" id="MF_00736">
    <property type="entry name" value="Ribosomal_uL11"/>
    <property type="match status" value="1"/>
</dbReference>
<dbReference type="InterPro" id="IPR000911">
    <property type="entry name" value="Ribosomal_uL11"/>
</dbReference>
<dbReference type="InterPro" id="IPR006519">
    <property type="entry name" value="Ribosomal_uL11_bac-typ"/>
</dbReference>
<dbReference type="InterPro" id="IPR020783">
    <property type="entry name" value="Ribosomal_uL11_C"/>
</dbReference>
<dbReference type="InterPro" id="IPR036769">
    <property type="entry name" value="Ribosomal_uL11_C_sf"/>
</dbReference>
<dbReference type="InterPro" id="IPR020785">
    <property type="entry name" value="Ribosomal_uL11_CS"/>
</dbReference>
<dbReference type="InterPro" id="IPR020784">
    <property type="entry name" value="Ribosomal_uL11_N"/>
</dbReference>
<dbReference type="InterPro" id="IPR036796">
    <property type="entry name" value="Ribosomal_uL11_N_sf"/>
</dbReference>
<dbReference type="NCBIfam" id="TIGR01632">
    <property type="entry name" value="L11_bact"/>
    <property type="match status" value="1"/>
</dbReference>
<dbReference type="PANTHER" id="PTHR11661">
    <property type="entry name" value="60S RIBOSOMAL PROTEIN L12"/>
    <property type="match status" value="1"/>
</dbReference>
<dbReference type="PANTHER" id="PTHR11661:SF1">
    <property type="entry name" value="LARGE RIBOSOMAL SUBUNIT PROTEIN UL11M"/>
    <property type="match status" value="1"/>
</dbReference>
<dbReference type="Pfam" id="PF00298">
    <property type="entry name" value="Ribosomal_L11"/>
    <property type="match status" value="1"/>
</dbReference>
<dbReference type="Pfam" id="PF03946">
    <property type="entry name" value="Ribosomal_L11_N"/>
    <property type="match status" value="1"/>
</dbReference>
<dbReference type="SMART" id="SM00649">
    <property type="entry name" value="RL11"/>
    <property type="match status" value="1"/>
</dbReference>
<dbReference type="SUPFAM" id="SSF54747">
    <property type="entry name" value="Ribosomal L11/L12e N-terminal domain"/>
    <property type="match status" value="1"/>
</dbReference>
<dbReference type="SUPFAM" id="SSF46906">
    <property type="entry name" value="Ribosomal protein L11, C-terminal domain"/>
    <property type="match status" value="1"/>
</dbReference>
<dbReference type="PROSITE" id="PS00359">
    <property type="entry name" value="RIBOSOMAL_L11"/>
    <property type="match status" value="1"/>
</dbReference>
<reference key="1">
    <citation type="submission" date="2009-03" db="EMBL/GenBank/DDBJ databases">
        <title>Complete genome sequence of Edwardsiella ictaluri 93-146.</title>
        <authorList>
            <person name="Williams M.L."/>
            <person name="Gillaspy A.F."/>
            <person name="Dyer D.W."/>
            <person name="Thune R.L."/>
            <person name="Waldbieser G.C."/>
            <person name="Schuster S.C."/>
            <person name="Gipson J."/>
            <person name="Zaitshik J."/>
            <person name="Landry C."/>
            <person name="Lawrence M.L."/>
        </authorList>
    </citation>
    <scope>NUCLEOTIDE SEQUENCE [LARGE SCALE GENOMIC DNA]</scope>
    <source>
        <strain>93-146</strain>
    </source>
</reference>
<organism>
    <name type="scientific">Edwardsiella ictaluri (strain 93-146)</name>
    <dbReference type="NCBI Taxonomy" id="634503"/>
    <lineage>
        <taxon>Bacteria</taxon>
        <taxon>Pseudomonadati</taxon>
        <taxon>Pseudomonadota</taxon>
        <taxon>Gammaproteobacteria</taxon>
        <taxon>Enterobacterales</taxon>
        <taxon>Hafniaceae</taxon>
        <taxon>Edwardsiella</taxon>
    </lineage>
</organism>
<accession>C5BHE0</accession>
<feature type="chain" id="PRO_1000212772" description="Large ribosomal subunit protein uL11">
    <location>
        <begin position="1"/>
        <end position="142"/>
    </location>
</feature>